<sequence>MGKLIKLITTLTVLVSLLQYCCEFNSGSISCERTQTLCHYTNPRVWNTYFSRNCELYKNKVSPGFDIVARKYDTAVKPVIDDATVKVNKVAIQPAFKVIHSQCKKWNCGKYYQLVRSPMVKTRRFFFAKYNAFVKPNIDKFFTAEFRSHLKERILKCKNIGHYYFTITSRCIKSKYDFIVGNTEEKLMGKFKNKDTHGIHGSVTHEPSSEDMVLTVSTMESDEEELTTTSTQTVVETITLDQEEASAVANHAHDDEASTDVEDSTDVNVNEQALLQEDFDMWSETILQKTQDVIQLFEKDVSKYIHGKLVEEANHFKAKFQSLDDKSKKFFSKISLAINDIECVEGIDSETGKKIFFDKSGSTEISQYITRELVREYFNETRSTLDELTNAMEKDLSEITDEIEKKVNAIREENVEVFEEWGDIIVNEWSKRMAYVDVINAHMGADDDTTLDEEKAKSSVNWKKFLKGKKQIIESRDKLAHHSADLSRVNAFRQKVQKKILSFTQESGEFLYILRSKANLQFQERERKERERKEREKAAAEEFQRQQELLLQQEEEDEEDVSYTSTSTITTTTTMTL</sequence>
<evidence type="ECO:0000250" key="1">
    <source>
        <dbReference type="UniProtKB" id="P53075"/>
    </source>
</evidence>
<evidence type="ECO:0000255" key="2"/>
<evidence type="ECO:0000256" key="3">
    <source>
        <dbReference type="SAM" id="MobiDB-lite"/>
    </source>
</evidence>
<evidence type="ECO:0000305" key="4"/>
<comment type="function">
    <text evidence="1">Involved in spore wall assembly. May be a component of the mitochondrial RNase MRP (MtMRP), a ribonucleoprotein endoribonuclease involved in the cleaving RNA transcripts to generate primers for DNA replication in mitochondria.</text>
</comment>
<comment type="subunit">
    <text evidence="1">Component of the mitochondria-localized RNase mitochondrial RNA-processing (RNase MRP) composed of one single RNA encoded by the NME1 gene and at least 31 proteins. Absent in the nucleus-localized RNase MRP (NuMRP).</text>
</comment>
<comment type="subcellular location">
    <subcellularLocation>
        <location evidence="1">Mitochondrion</location>
    </subcellularLocation>
</comment>
<comment type="similarity">
    <text evidence="4">Belongs to the SHE10 family.</text>
</comment>
<organism>
    <name type="scientific">Saccharomyces cerevisiae (strain RM11-1a)</name>
    <name type="common">Baker's yeast</name>
    <dbReference type="NCBI Taxonomy" id="285006"/>
    <lineage>
        <taxon>Eukaryota</taxon>
        <taxon>Fungi</taxon>
        <taxon>Dikarya</taxon>
        <taxon>Ascomycota</taxon>
        <taxon>Saccharomycotina</taxon>
        <taxon>Saccharomycetes</taxon>
        <taxon>Saccharomycetales</taxon>
        <taxon>Saccharomycetaceae</taxon>
        <taxon>Saccharomyces</taxon>
    </lineage>
</organism>
<reference key="1">
    <citation type="submission" date="2005-03" db="EMBL/GenBank/DDBJ databases">
        <title>Annotation of the Saccharomyces cerevisiae RM11-1a genome.</title>
        <authorList>
            <consortium name="The Broad Institute Genome Sequencing Platform"/>
            <person name="Birren B.W."/>
            <person name="Lander E.S."/>
            <person name="Galagan J.E."/>
            <person name="Nusbaum C."/>
            <person name="Devon K."/>
            <person name="Cuomo C."/>
            <person name="Jaffe D.B."/>
            <person name="Butler J."/>
            <person name="Alvarez P."/>
            <person name="Gnerre S."/>
            <person name="Grabherr M."/>
            <person name="Kleber M."/>
            <person name="Mauceli E.W."/>
            <person name="Brockman W."/>
            <person name="MacCallum I.A."/>
            <person name="Rounsley S."/>
            <person name="Young S.K."/>
            <person name="LaButti K."/>
            <person name="Pushparaj V."/>
            <person name="DeCaprio D."/>
            <person name="Crawford M."/>
            <person name="Koehrsen M."/>
            <person name="Engels R."/>
            <person name="Montgomery P."/>
            <person name="Pearson M."/>
            <person name="Howarth C."/>
            <person name="Larson L."/>
            <person name="Luoma S."/>
            <person name="White J."/>
            <person name="O'Leary S."/>
            <person name="Kodira C.D."/>
            <person name="Zeng Q."/>
            <person name="Yandava C."/>
            <person name="Alvarado L."/>
            <person name="Pratt S."/>
            <person name="Kruglyak L."/>
        </authorList>
    </citation>
    <scope>NUCLEOTIDE SEQUENCE [LARGE SCALE GENOMIC DNA]</scope>
    <source>
        <strain>RM11-1a</strain>
    </source>
</reference>
<feature type="signal peptide" evidence="2">
    <location>
        <begin position="1"/>
        <end position="23"/>
    </location>
</feature>
<feature type="chain" id="PRO_0000408911" description="Outer spore wall assembly protein SHE10">
    <location>
        <begin position="24"/>
        <end position="577"/>
    </location>
</feature>
<feature type="region of interest" description="Disordered" evidence="3">
    <location>
        <begin position="525"/>
        <end position="577"/>
    </location>
</feature>
<feature type="coiled-coil region" evidence="2">
    <location>
        <begin position="379"/>
        <end position="416"/>
    </location>
</feature>
<feature type="coiled-coil region" evidence="2">
    <location>
        <begin position="513"/>
        <end position="561"/>
    </location>
</feature>
<feature type="compositionally biased region" description="Basic and acidic residues" evidence="3">
    <location>
        <begin position="525"/>
        <end position="545"/>
    </location>
</feature>
<feature type="compositionally biased region" description="Low complexity" evidence="3">
    <location>
        <begin position="562"/>
        <end position="577"/>
    </location>
</feature>
<dbReference type="EMBL" id="CH408044">
    <property type="protein sequence ID" value="EDV10429.1"/>
    <property type="molecule type" value="Genomic_DNA"/>
</dbReference>
<dbReference type="SMR" id="B3LHS1"/>
<dbReference type="HOGENOM" id="CLU_023952_1_0_1"/>
<dbReference type="OrthoDB" id="40211at4893"/>
<dbReference type="Proteomes" id="UP000008335">
    <property type="component" value="Unassembled WGS sequence"/>
</dbReference>
<dbReference type="GO" id="GO:0005739">
    <property type="term" value="C:mitochondrion"/>
    <property type="evidence" value="ECO:0007669"/>
    <property type="project" value="UniProtKB-SubCell"/>
</dbReference>
<dbReference type="GO" id="GO:1990904">
    <property type="term" value="C:ribonucleoprotein complex"/>
    <property type="evidence" value="ECO:0007669"/>
    <property type="project" value="UniProtKB-KW"/>
</dbReference>
<dbReference type="GO" id="GO:0030435">
    <property type="term" value="P:sporulation resulting in formation of a cellular spore"/>
    <property type="evidence" value="ECO:0007669"/>
    <property type="project" value="UniProtKB-KW"/>
</dbReference>
<keyword id="KW-0175">Coiled coil</keyword>
<keyword id="KW-0496">Mitochondrion</keyword>
<keyword id="KW-0687">Ribonucleoprotein</keyword>
<keyword id="KW-0732">Signal</keyword>
<keyword id="KW-0749">Sporulation</keyword>
<proteinExistence type="inferred from homology"/>
<gene>
    <name evidence="1" type="primary">SHE10</name>
    <name type="ORF">SCRG_01213</name>
</gene>
<accession>B3LHS1</accession>
<protein>
    <recommendedName>
        <fullName evidence="1">Outer spore wall assembly protein SHE10</fullName>
    </recommendedName>
    <alternativeName>
        <fullName evidence="1">Sensitivity to high expression protein 10</fullName>
    </alternativeName>
</protein>
<name>SHE10_YEAS1</name>